<accession>A7ME70</accession>
<keyword id="KW-0560">Oxidoreductase</keyword>
<keyword id="KW-1185">Reference proteome</keyword>
<keyword id="KW-0819">tRNA processing</keyword>
<protein>
    <recommendedName>
        <fullName evidence="1">tRNA uridine(34) hydroxylase</fullName>
        <ecNumber evidence="1">1.14.-.-</ecNumber>
    </recommendedName>
    <alternativeName>
        <fullName evidence="1">tRNA hydroxylation protein O</fullName>
    </alternativeName>
</protein>
<sequence length="349" mass="39700">MPVLHNRISNEELRARMLAETEPRTTISFYKYFTIDDPKATRDALWQAFTALNVFGRIYLAHEGINAQISVPESNVEAFRAALYGFHPALDGVRLNIALDDDGKSFWVLRMKVRDRIVADGIDDPTFDASDVGEYLKAAEVNAMLDDPDAVFIDMRNHYEYEVGHFENALEIPADTFRAQLPKAVEMMQEYKDKKIVMYCTGGIRCEKASAFMRHNGFQKVWHIEGGIIEYARKAREQGLPVRFVGKNFVFDERMGERISDDVIAHCHQCGAPCDSHTNCKNDGCHLLFIQCPACAEKFSGCCSELCKEEMSLPEEEQRRRRAGRENGNKIFNKSRGRLNTTLGIPDPE</sequence>
<gene>
    <name evidence="1" type="primary">trhO</name>
    <name type="ordered locus">ESA_02292</name>
</gene>
<evidence type="ECO:0000255" key="1">
    <source>
        <dbReference type="HAMAP-Rule" id="MF_00469"/>
    </source>
</evidence>
<evidence type="ECO:0000256" key="2">
    <source>
        <dbReference type="SAM" id="MobiDB-lite"/>
    </source>
</evidence>
<comment type="function">
    <text evidence="1">Catalyzes oxygen-dependent 5-hydroxyuridine (ho5U) modification at position 34 in tRNAs.</text>
</comment>
<comment type="catalytic activity">
    <reaction evidence="1">
        <text>uridine(34) in tRNA + AH2 + O2 = 5-hydroxyuridine(34) in tRNA + A + H2O</text>
        <dbReference type="Rhea" id="RHEA:64224"/>
        <dbReference type="Rhea" id="RHEA-COMP:11727"/>
        <dbReference type="Rhea" id="RHEA-COMP:13381"/>
        <dbReference type="ChEBI" id="CHEBI:13193"/>
        <dbReference type="ChEBI" id="CHEBI:15377"/>
        <dbReference type="ChEBI" id="CHEBI:15379"/>
        <dbReference type="ChEBI" id="CHEBI:17499"/>
        <dbReference type="ChEBI" id="CHEBI:65315"/>
        <dbReference type="ChEBI" id="CHEBI:136877"/>
    </reaction>
</comment>
<comment type="similarity">
    <text evidence="1">Belongs to the TrhO family.</text>
</comment>
<reference key="1">
    <citation type="journal article" date="2010" name="PLoS ONE">
        <title>Genome sequence of Cronobacter sakazakii BAA-894 and comparative genomic hybridization analysis with other Cronobacter species.</title>
        <authorList>
            <person name="Kucerova E."/>
            <person name="Clifton S.W."/>
            <person name="Xia X.Q."/>
            <person name="Long F."/>
            <person name="Porwollik S."/>
            <person name="Fulton L."/>
            <person name="Fronick C."/>
            <person name="Minx P."/>
            <person name="Kyung K."/>
            <person name="Warren W."/>
            <person name="Fulton R."/>
            <person name="Feng D."/>
            <person name="Wollam A."/>
            <person name="Shah N."/>
            <person name="Bhonagiri V."/>
            <person name="Nash W.E."/>
            <person name="Hallsworth-Pepin K."/>
            <person name="Wilson R.K."/>
            <person name="McClelland M."/>
            <person name="Forsythe S.J."/>
        </authorList>
    </citation>
    <scope>NUCLEOTIDE SEQUENCE [LARGE SCALE GENOMIC DNA]</scope>
    <source>
        <strain>ATCC BAA-894</strain>
    </source>
</reference>
<name>TRHO_CROS8</name>
<proteinExistence type="inferred from homology"/>
<feature type="chain" id="PRO_1000013739" description="tRNA uridine(34) hydroxylase">
    <location>
        <begin position="1"/>
        <end position="349"/>
    </location>
</feature>
<feature type="domain" description="Rhodanese" evidence="1">
    <location>
        <begin position="146"/>
        <end position="240"/>
    </location>
</feature>
<feature type="region of interest" description="Disordered" evidence="2">
    <location>
        <begin position="314"/>
        <end position="349"/>
    </location>
</feature>
<feature type="compositionally biased region" description="Basic and acidic residues" evidence="2">
    <location>
        <begin position="314"/>
        <end position="328"/>
    </location>
</feature>
<feature type="active site" description="Cysteine persulfide intermediate" evidence="1">
    <location>
        <position position="200"/>
    </location>
</feature>
<dbReference type="EC" id="1.14.-.-" evidence="1"/>
<dbReference type="EMBL" id="CP000783">
    <property type="protein sequence ID" value="ABU77541.1"/>
    <property type="molecule type" value="Genomic_DNA"/>
</dbReference>
<dbReference type="RefSeq" id="WP_012125102.1">
    <property type="nucleotide sequence ID" value="NC_009778.1"/>
</dbReference>
<dbReference type="SMR" id="A7ME70"/>
<dbReference type="KEGG" id="esa:ESA_02292"/>
<dbReference type="PATRIC" id="fig|290339.8.peg.2052"/>
<dbReference type="HOGENOM" id="CLU_038878_1_1_6"/>
<dbReference type="Proteomes" id="UP000000260">
    <property type="component" value="Chromosome"/>
</dbReference>
<dbReference type="GO" id="GO:0016705">
    <property type="term" value="F:oxidoreductase activity, acting on paired donors, with incorporation or reduction of molecular oxygen"/>
    <property type="evidence" value="ECO:0007669"/>
    <property type="project" value="UniProtKB-UniRule"/>
</dbReference>
<dbReference type="GO" id="GO:0006400">
    <property type="term" value="P:tRNA modification"/>
    <property type="evidence" value="ECO:0007669"/>
    <property type="project" value="UniProtKB-UniRule"/>
</dbReference>
<dbReference type="CDD" id="cd01518">
    <property type="entry name" value="RHOD_YceA"/>
    <property type="match status" value="1"/>
</dbReference>
<dbReference type="Gene3D" id="3.30.70.100">
    <property type="match status" value="1"/>
</dbReference>
<dbReference type="Gene3D" id="3.40.250.10">
    <property type="entry name" value="Rhodanese-like domain"/>
    <property type="match status" value="1"/>
</dbReference>
<dbReference type="HAMAP" id="MF_00469">
    <property type="entry name" value="TrhO"/>
    <property type="match status" value="1"/>
</dbReference>
<dbReference type="InterPro" id="IPR001763">
    <property type="entry name" value="Rhodanese-like_dom"/>
</dbReference>
<dbReference type="InterPro" id="IPR036873">
    <property type="entry name" value="Rhodanese-like_dom_sf"/>
</dbReference>
<dbReference type="InterPro" id="IPR022111">
    <property type="entry name" value="Rhodanese_C"/>
</dbReference>
<dbReference type="InterPro" id="IPR020936">
    <property type="entry name" value="TrhO"/>
</dbReference>
<dbReference type="InterPro" id="IPR040503">
    <property type="entry name" value="TRHO_N"/>
</dbReference>
<dbReference type="NCBIfam" id="NF001133">
    <property type="entry name" value="PRK00142.1-1"/>
    <property type="match status" value="1"/>
</dbReference>
<dbReference type="PANTHER" id="PTHR43846:SF1">
    <property type="entry name" value="TRNA URIDINE(34) HYDROXYLASE"/>
    <property type="match status" value="1"/>
</dbReference>
<dbReference type="PANTHER" id="PTHR43846">
    <property type="entry name" value="UPF0176 PROTEIN YCEA"/>
    <property type="match status" value="1"/>
</dbReference>
<dbReference type="Pfam" id="PF00581">
    <property type="entry name" value="Rhodanese"/>
    <property type="match status" value="1"/>
</dbReference>
<dbReference type="Pfam" id="PF12368">
    <property type="entry name" value="Rhodanese_C"/>
    <property type="match status" value="1"/>
</dbReference>
<dbReference type="Pfam" id="PF17773">
    <property type="entry name" value="UPF0176_N"/>
    <property type="match status" value="1"/>
</dbReference>
<dbReference type="SMART" id="SM00450">
    <property type="entry name" value="RHOD"/>
    <property type="match status" value="1"/>
</dbReference>
<dbReference type="SUPFAM" id="SSF52821">
    <property type="entry name" value="Rhodanese/Cell cycle control phosphatase"/>
    <property type="match status" value="1"/>
</dbReference>
<dbReference type="PROSITE" id="PS50206">
    <property type="entry name" value="RHODANESE_3"/>
    <property type="match status" value="1"/>
</dbReference>
<organism>
    <name type="scientific">Cronobacter sakazakii (strain ATCC BAA-894)</name>
    <name type="common">Enterobacter sakazakii</name>
    <dbReference type="NCBI Taxonomy" id="290339"/>
    <lineage>
        <taxon>Bacteria</taxon>
        <taxon>Pseudomonadati</taxon>
        <taxon>Pseudomonadota</taxon>
        <taxon>Gammaproteobacteria</taxon>
        <taxon>Enterobacterales</taxon>
        <taxon>Enterobacteriaceae</taxon>
        <taxon>Cronobacter</taxon>
    </lineage>
</organism>